<sequence>MPRAFLVRSRRPQPPNWGHLPDQLRGDAYIPDCSSLGGPPAQQSSSVRDPWTAQPTQGNLTSAPRGPGTLGCPLCPKAFPLQRMLTRHLKCHSPVRRHLCRCCGKGFHDAFDLKRHMRTHTGIRPFRCSACGKAFTQRCSLEAHLAKVHGQPASYAYRERREKLHVCEDCGFTSSRPDTYAQHRALHRAA</sequence>
<dbReference type="EMBL" id="AD001527">
    <property type="protein sequence ID" value="AAB51180.1"/>
    <property type="status" value="ALT_SEQ"/>
    <property type="molecule type" value="Genomic_DNA"/>
</dbReference>
<dbReference type="EMBL" id="AC004144">
    <property type="status" value="NOT_ANNOTATED_CDS"/>
    <property type="molecule type" value="Genomic_DNA"/>
</dbReference>
<dbReference type="CCDS" id="CCDS82333.1"/>
<dbReference type="RefSeq" id="NP_001289686.1">
    <property type="nucleotide sequence ID" value="NM_001302757.2"/>
</dbReference>
<dbReference type="SMR" id="O00110"/>
<dbReference type="FunCoup" id="O00110">
    <property type="interactions" value="188"/>
</dbReference>
<dbReference type="STRING" id="9606.ENSP00000487603"/>
<dbReference type="iPTMnet" id="O00110"/>
<dbReference type="PhosphoSitePlus" id="O00110"/>
<dbReference type="BioMuta" id="OVOL3"/>
<dbReference type="MassIVE" id="O00110"/>
<dbReference type="PaxDb" id="9606-ENSP00000465620"/>
<dbReference type="Antibodypedia" id="82592">
    <property type="antibodies" value="2 antibodies from 2 providers"/>
</dbReference>
<dbReference type="DNASU" id="728361"/>
<dbReference type="Ensembl" id="ENST00000633214.2">
    <property type="protein sequence ID" value="ENSP00000487603.1"/>
    <property type="gene ID" value="ENSG00000105261.8"/>
</dbReference>
<dbReference type="GeneID" id="728361"/>
<dbReference type="KEGG" id="hsa:728361"/>
<dbReference type="MANE-Select" id="ENST00000633214.2">
    <property type="protein sequence ID" value="ENSP00000487603.1"/>
    <property type="RefSeq nucleotide sequence ID" value="NM_001302757.2"/>
    <property type="RefSeq protein sequence ID" value="NP_001289686.1"/>
</dbReference>
<dbReference type="UCSC" id="uc031rkj.2">
    <property type="organism name" value="human"/>
</dbReference>
<dbReference type="AGR" id="HGNC:14186"/>
<dbReference type="CTD" id="728361"/>
<dbReference type="DisGeNET" id="728361"/>
<dbReference type="GeneCards" id="OVOL3"/>
<dbReference type="HGNC" id="HGNC:14186">
    <property type="gene designation" value="OVOL3"/>
</dbReference>
<dbReference type="HPA" id="ENSG00000105261">
    <property type="expression patterns" value="Tissue enriched (testis)"/>
</dbReference>
<dbReference type="MIM" id="616442">
    <property type="type" value="gene"/>
</dbReference>
<dbReference type="neXtProt" id="NX_O00110"/>
<dbReference type="VEuPathDB" id="HostDB:ENSG00000105261"/>
<dbReference type="eggNOG" id="KOG3576">
    <property type="taxonomic scope" value="Eukaryota"/>
</dbReference>
<dbReference type="GeneTree" id="ENSGT00940000162348"/>
<dbReference type="InParanoid" id="O00110"/>
<dbReference type="OMA" id="PPNWDHL"/>
<dbReference type="OrthoDB" id="6508643at2759"/>
<dbReference type="PAN-GO" id="O00110">
    <property type="GO annotations" value="5 GO annotations based on evolutionary models"/>
</dbReference>
<dbReference type="BioGRID-ORCS" id="728361">
    <property type="hits" value="14 hits in 412 CRISPR screens"/>
</dbReference>
<dbReference type="ChiTaRS" id="OVOL3">
    <property type="organism name" value="human"/>
</dbReference>
<dbReference type="GenomeRNAi" id="728361"/>
<dbReference type="Pharos" id="O00110">
    <property type="development level" value="Tdark"/>
</dbReference>
<dbReference type="PRO" id="PR:O00110"/>
<dbReference type="Proteomes" id="UP000005640">
    <property type="component" value="Chromosome 19"/>
</dbReference>
<dbReference type="RNAct" id="O00110">
    <property type="molecule type" value="protein"/>
</dbReference>
<dbReference type="Bgee" id="ENSG00000105261">
    <property type="expression patterns" value="Expressed in right testis and 87 other cell types or tissues"/>
</dbReference>
<dbReference type="ExpressionAtlas" id="O00110">
    <property type="expression patterns" value="baseline and differential"/>
</dbReference>
<dbReference type="GO" id="GO:0000785">
    <property type="term" value="C:chromatin"/>
    <property type="evidence" value="ECO:0000247"/>
    <property type="project" value="NTNU_SB"/>
</dbReference>
<dbReference type="GO" id="GO:0005634">
    <property type="term" value="C:nucleus"/>
    <property type="evidence" value="ECO:0000318"/>
    <property type="project" value="GO_Central"/>
</dbReference>
<dbReference type="GO" id="GO:0000981">
    <property type="term" value="F:DNA-binding transcription factor activity, RNA polymerase II-specific"/>
    <property type="evidence" value="ECO:0000247"/>
    <property type="project" value="NTNU_SB"/>
</dbReference>
<dbReference type="GO" id="GO:0000978">
    <property type="term" value="F:RNA polymerase II cis-regulatory region sequence-specific DNA binding"/>
    <property type="evidence" value="ECO:0000318"/>
    <property type="project" value="GO_Central"/>
</dbReference>
<dbReference type="GO" id="GO:0008270">
    <property type="term" value="F:zinc ion binding"/>
    <property type="evidence" value="ECO:0007669"/>
    <property type="project" value="UniProtKB-KW"/>
</dbReference>
<dbReference type="GO" id="GO:0009913">
    <property type="term" value="P:epidermal cell differentiation"/>
    <property type="evidence" value="ECO:0000318"/>
    <property type="project" value="GO_Central"/>
</dbReference>
<dbReference type="GO" id="GO:0006357">
    <property type="term" value="P:regulation of transcription by RNA polymerase II"/>
    <property type="evidence" value="ECO:0000318"/>
    <property type="project" value="GO_Central"/>
</dbReference>
<dbReference type="FunFam" id="3.30.160.60:FF:001250">
    <property type="entry name" value="putative transcription factor ovo-like protein 3"/>
    <property type="match status" value="1"/>
</dbReference>
<dbReference type="FunFam" id="3.30.160.60:FF:000452">
    <property type="entry name" value="Transcription factor Ovo-like 2"/>
    <property type="match status" value="1"/>
</dbReference>
<dbReference type="Gene3D" id="3.30.160.60">
    <property type="entry name" value="Classic Zinc Finger"/>
    <property type="match status" value="2"/>
</dbReference>
<dbReference type="InterPro" id="IPR027756">
    <property type="entry name" value="Ovo-like"/>
</dbReference>
<dbReference type="InterPro" id="IPR036236">
    <property type="entry name" value="Znf_C2H2_sf"/>
</dbReference>
<dbReference type="InterPro" id="IPR013087">
    <property type="entry name" value="Znf_C2H2_type"/>
</dbReference>
<dbReference type="PANTHER" id="PTHR10032:SF220">
    <property type="entry name" value="TRANSCRIPTION FACTOR OVO-LIKE PROTEIN 3-RELATED"/>
    <property type="match status" value="1"/>
</dbReference>
<dbReference type="PANTHER" id="PTHR10032">
    <property type="entry name" value="ZINC FINGER PROTEIN WITH KRAB AND SCAN DOMAINS"/>
    <property type="match status" value="1"/>
</dbReference>
<dbReference type="Pfam" id="PF00096">
    <property type="entry name" value="zf-C2H2"/>
    <property type="match status" value="1"/>
</dbReference>
<dbReference type="Pfam" id="PF13465">
    <property type="entry name" value="zf-H2C2_2"/>
    <property type="match status" value="1"/>
</dbReference>
<dbReference type="SMART" id="SM00355">
    <property type="entry name" value="ZnF_C2H2"/>
    <property type="match status" value="4"/>
</dbReference>
<dbReference type="SUPFAM" id="SSF57667">
    <property type="entry name" value="beta-beta-alpha zinc fingers"/>
    <property type="match status" value="1"/>
</dbReference>
<dbReference type="PROSITE" id="PS00028">
    <property type="entry name" value="ZINC_FINGER_C2H2_1"/>
    <property type="match status" value="3"/>
</dbReference>
<dbReference type="PROSITE" id="PS50157">
    <property type="entry name" value="ZINC_FINGER_C2H2_2"/>
    <property type="match status" value="3"/>
</dbReference>
<proteinExistence type="inferred from homology"/>
<organism>
    <name type="scientific">Homo sapiens</name>
    <name type="common">Human</name>
    <dbReference type="NCBI Taxonomy" id="9606"/>
    <lineage>
        <taxon>Eukaryota</taxon>
        <taxon>Metazoa</taxon>
        <taxon>Chordata</taxon>
        <taxon>Craniata</taxon>
        <taxon>Vertebrata</taxon>
        <taxon>Euteleostomi</taxon>
        <taxon>Mammalia</taxon>
        <taxon>Eutheria</taxon>
        <taxon>Euarchontoglires</taxon>
        <taxon>Primates</taxon>
        <taxon>Haplorrhini</taxon>
        <taxon>Catarrhini</taxon>
        <taxon>Hominidae</taxon>
        <taxon>Homo</taxon>
    </lineage>
</organism>
<comment type="function">
    <text evidence="1">May act as a transcription regulator.</text>
</comment>
<comment type="subcellular location">
    <subcellularLocation>
        <location evidence="4">Nucleus</location>
    </subcellularLocation>
</comment>
<comment type="similarity">
    <text evidence="4">Belongs to the krueppel C2H2-type zinc-finger protein family.</text>
</comment>
<comment type="sequence caution" evidence="4">
    <conflict type="erroneous gene model prediction">
        <sequence resource="EMBL-CDS" id="AAB51180"/>
    </conflict>
</comment>
<protein>
    <recommendedName>
        <fullName>Putative transcription factor ovo-like protein 3</fullName>
    </recommendedName>
</protein>
<keyword id="KW-0479">Metal-binding</keyword>
<keyword id="KW-0539">Nucleus</keyword>
<keyword id="KW-1185">Reference proteome</keyword>
<keyword id="KW-0677">Repeat</keyword>
<keyword id="KW-0804">Transcription</keyword>
<keyword id="KW-0805">Transcription regulation</keyword>
<keyword id="KW-0862">Zinc</keyword>
<keyword id="KW-0863">Zinc-finger</keyword>
<accession>O00110</accession>
<accession>A0A0J9YVN9</accession>
<feature type="chain" id="PRO_0000320622" description="Putative transcription factor ovo-like protein 3">
    <location>
        <begin position="1"/>
        <end position="190"/>
    </location>
</feature>
<feature type="zinc finger region" description="C2H2-type 1" evidence="2">
    <location>
        <begin position="70"/>
        <end position="92"/>
    </location>
</feature>
<feature type="zinc finger region" description="C2H2-type 2" evidence="2">
    <location>
        <begin position="98"/>
        <end position="120"/>
    </location>
</feature>
<feature type="zinc finger region" description="C2H2-type 3" evidence="2">
    <location>
        <begin position="126"/>
        <end position="149"/>
    </location>
</feature>
<feature type="zinc finger region" description="C2H2-type 4" evidence="2">
    <location>
        <begin position="165"/>
        <end position="187"/>
    </location>
</feature>
<feature type="region of interest" description="Disordered" evidence="3">
    <location>
        <begin position="1"/>
        <end position="21"/>
    </location>
</feature>
<feature type="region of interest" description="Disordered" evidence="3">
    <location>
        <begin position="35"/>
        <end position="65"/>
    </location>
</feature>
<feature type="compositionally biased region" description="Polar residues" evidence="3">
    <location>
        <begin position="41"/>
        <end position="62"/>
    </location>
</feature>
<gene>
    <name type="primary">OVOL3</name>
</gene>
<evidence type="ECO:0000250" key="1"/>
<evidence type="ECO:0000255" key="2">
    <source>
        <dbReference type="PROSITE-ProRule" id="PRU00042"/>
    </source>
</evidence>
<evidence type="ECO:0000256" key="3">
    <source>
        <dbReference type="SAM" id="MobiDB-lite"/>
    </source>
</evidence>
<evidence type="ECO:0000305" key="4"/>
<name>OVOL3_HUMAN</name>
<reference key="1">
    <citation type="journal article" date="2004" name="Nature">
        <title>The DNA sequence and biology of human chromosome 19.</title>
        <authorList>
            <person name="Grimwood J."/>
            <person name="Gordon L.A."/>
            <person name="Olsen A.S."/>
            <person name="Terry A."/>
            <person name="Schmutz J."/>
            <person name="Lamerdin J.E."/>
            <person name="Hellsten U."/>
            <person name="Goodstein D."/>
            <person name="Couronne O."/>
            <person name="Tran-Gyamfi M."/>
            <person name="Aerts A."/>
            <person name="Altherr M."/>
            <person name="Ashworth L."/>
            <person name="Bajorek E."/>
            <person name="Black S."/>
            <person name="Branscomb E."/>
            <person name="Caenepeel S."/>
            <person name="Carrano A.V."/>
            <person name="Caoile C."/>
            <person name="Chan Y.M."/>
            <person name="Christensen M."/>
            <person name="Cleland C.A."/>
            <person name="Copeland A."/>
            <person name="Dalin E."/>
            <person name="Dehal P."/>
            <person name="Denys M."/>
            <person name="Detter J.C."/>
            <person name="Escobar J."/>
            <person name="Flowers D."/>
            <person name="Fotopulos D."/>
            <person name="Garcia C."/>
            <person name="Georgescu A.M."/>
            <person name="Glavina T."/>
            <person name="Gomez M."/>
            <person name="Gonzales E."/>
            <person name="Groza M."/>
            <person name="Hammon N."/>
            <person name="Hawkins T."/>
            <person name="Haydu L."/>
            <person name="Ho I."/>
            <person name="Huang W."/>
            <person name="Israni S."/>
            <person name="Jett J."/>
            <person name="Kadner K."/>
            <person name="Kimball H."/>
            <person name="Kobayashi A."/>
            <person name="Larionov V."/>
            <person name="Leem S.-H."/>
            <person name="Lopez F."/>
            <person name="Lou Y."/>
            <person name="Lowry S."/>
            <person name="Malfatti S."/>
            <person name="Martinez D."/>
            <person name="McCready P.M."/>
            <person name="Medina C."/>
            <person name="Morgan J."/>
            <person name="Nelson K."/>
            <person name="Nolan M."/>
            <person name="Ovcharenko I."/>
            <person name="Pitluck S."/>
            <person name="Pollard M."/>
            <person name="Popkie A.P."/>
            <person name="Predki P."/>
            <person name="Quan G."/>
            <person name="Ramirez L."/>
            <person name="Rash S."/>
            <person name="Retterer J."/>
            <person name="Rodriguez A."/>
            <person name="Rogers S."/>
            <person name="Salamov A."/>
            <person name="Salazar A."/>
            <person name="She X."/>
            <person name="Smith D."/>
            <person name="Slezak T."/>
            <person name="Solovyev V."/>
            <person name="Thayer N."/>
            <person name="Tice H."/>
            <person name="Tsai M."/>
            <person name="Ustaszewska A."/>
            <person name="Vo N."/>
            <person name="Wagner M."/>
            <person name="Wheeler J."/>
            <person name="Wu K."/>
            <person name="Xie G."/>
            <person name="Yang J."/>
            <person name="Dubchak I."/>
            <person name="Furey T.S."/>
            <person name="DeJong P."/>
            <person name="Dickson M."/>
            <person name="Gordon D."/>
            <person name="Eichler E.E."/>
            <person name="Pennacchio L.A."/>
            <person name="Richardson P."/>
            <person name="Stubbs L."/>
            <person name="Rokhsar D.S."/>
            <person name="Myers R.M."/>
            <person name="Rubin E.M."/>
            <person name="Lucas S.M."/>
        </authorList>
    </citation>
    <scope>NUCLEOTIDE SEQUENCE [LARGE SCALE GENOMIC DNA]</scope>
</reference>